<feature type="chain" id="PRO_0000133090" description="Replication protein E1">
    <location>
        <begin position="1"/>
        <end position="605"/>
    </location>
</feature>
<feature type="domain" description="SF3 helicase" evidence="2">
    <location>
        <begin position="407"/>
        <end position="557"/>
    </location>
</feature>
<feature type="region of interest" description="Disordered" evidence="3">
    <location>
        <begin position="90"/>
        <end position="112"/>
    </location>
</feature>
<feature type="region of interest" description="DNA-binding region" evidence="2">
    <location>
        <begin position="142"/>
        <end position="308"/>
    </location>
</feature>
<feature type="region of interest" description="Disordered" evidence="3">
    <location>
        <begin position="582"/>
        <end position="605"/>
    </location>
</feature>
<feature type="short sequence motif" description="Nuclear localization signal" evidence="2 10">
    <location>
        <begin position="84"/>
        <end position="86"/>
    </location>
</feature>
<feature type="short sequence motif" description="Nuclear localization signal" evidence="10">
    <location>
        <begin position="105"/>
        <end position="108"/>
    </location>
</feature>
<feature type="compositionally biased region" description="Low complexity" evidence="3">
    <location>
        <begin position="90"/>
        <end position="101"/>
    </location>
</feature>
<feature type="compositionally biased region" description="Polar residues" evidence="3">
    <location>
        <begin position="592"/>
        <end position="605"/>
    </location>
</feature>
<feature type="binding site" evidence="2">
    <location>
        <begin position="433"/>
        <end position="440"/>
    </location>
    <ligand>
        <name>ATP</name>
        <dbReference type="ChEBI" id="CHEBI:30616"/>
    </ligand>
</feature>
<feature type="modified residue" description="Phosphoserine; by host" evidence="2">
    <location>
        <position position="90"/>
    </location>
</feature>
<feature type="modified residue" description="Phosphoserine; by host" evidence="2">
    <location>
        <position position="94"/>
    </location>
</feature>
<feature type="modified residue" description="Phosphothreonine; by host CDK1" evidence="10">
    <location>
        <position position="102"/>
    </location>
</feature>
<feature type="modified residue" description="Phosphoserine; by host" evidence="11">
    <location>
        <position position="109"/>
    </location>
</feature>
<feature type="cross-link" description="Glycyl lysine isopeptide (Lys-Gly) (interchain with G-Cter in SUMO)" evidence="2 4">
    <location>
        <position position="514"/>
    </location>
</feature>
<feature type="mutagenesis site" description="About 95% loss of nuclear localization." evidence="10">
    <original>KR</original>
    <variation>GG</variation>
    <location>
        <begin position="84"/>
        <end position="85"/>
    </location>
</feature>
<feature type="mutagenesis site" description="About 50% increase in replication of viral DNA." evidence="11">
    <original>S</original>
    <variation>A</variation>
    <location>
        <position position="109"/>
    </location>
</feature>
<feature type="mutagenesis site" description="Complete loss of sumoylation." evidence="4">
    <original>K</original>
    <variation>R</variation>
    <location>
        <position position="514"/>
    </location>
</feature>
<feature type="helix" evidence="20">
    <location>
        <begin position="161"/>
        <end position="171"/>
    </location>
</feature>
<feature type="helix" evidence="20">
    <location>
        <begin position="175"/>
        <end position="177"/>
    </location>
</feature>
<feature type="strand" evidence="20">
    <location>
        <begin position="189"/>
        <end position="198"/>
    </location>
</feature>
<feature type="helix" evidence="20">
    <location>
        <begin position="201"/>
        <end position="212"/>
    </location>
</feature>
<feature type="strand" evidence="20">
    <location>
        <begin position="215"/>
        <end position="225"/>
    </location>
</feature>
<feature type="strand" evidence="20">
    <location>
        <begin position="228"/>
        <end position="241"/>
    </location>
</feature>
<feature type="helix" evidence="20">
    <location>
        <begin position="243"/>
        <end position="254"/>
    </location>
</feature>
<feature type="helix" evidence="20">
    <location>
        <begin position="258"/>
        <end position="260"/>
    </location>
</feature>
<feature type="strand" evidence="20">
    <location>
        <begin position="261"/>
        <end position="264"/>
    </location>
</feature>
<feature type="helix" evidence="20">
    <location>
        <begin position="271"/>
        <end position="280"/>
    </location>
</feature>
<feature type="strand" evidence="20">
    <location>
        <begin position="283"/>
        <end position="285"/>
    </location>
</feature>
<feature type="strand" evidence="20">
    <location>
        <begin position="287"/>
        <end position="290"/>
    </location>
</feature>
<feature type="helix" evidence="20">
    <location>
        <begin position="294"/>
        <end position="299"/>
    </location>
</feature>
<feature type="helix" evidence="22">
    <location>
        <begin position="313"/>
        <end position="322"/>
    </location>
</feature>
<feature type="helix" evidence="22">
    <location>
        <begin position="328"/>
        <end position="337"/>
    </location>
</feature>
<feature type="turn" evidence="22">
    <location>
        <begin position="338"/>
        <end position="341"/>
    </location>
</feature>
<feature type="helix" evidence="22">
    <location>
        <begin position="343"/>
        <end position="348"/>
    </location>
</feature>
<feature type="helix" evidence="22">
    <location>
        <begin position="354"/>
        <end position="375"/>
    </location>
</feature>
<feature type="helix" evidence="22">
    <location>
        <begin position="378"/>
        <end position="388"/>
    </location>
</feature>
<feature type="helix" evidence="22">
    <location>
        <begin position="396"/>
        <end position="404"/>
    </location>
</feature>
<feature type="helix" evidence="22">
    <location>
        <begin position="409"/>
        <end position="421"/>
    </location>
</feature>
<feature type="strand" evidence="22">
    <location>
        <begin position="427"/>
        <end position="432"/>
    </location>
</feature>
<feature type="strand" evidence="22">
    <location>
        <begin position="434"/>
        <end position="438"/>
    </location>
</feature>
<feature type="helix" evidence="22">
    <location>
        <begin position="439"/>
        <end position="450"/>
    </location>
</feature>
<feature type="strand" evidence="22">
    <location>
        <begin position="453"/>
        <end position="455"/>
    </location>
</feature>
<feature type="helix" evidence="22">
    <location>
        <begin position="457"/>
        <end position="459"/>
    </location>
</feature>
<feature type="helix" evidence="22">
    <location>
        <begin position="463"/>
        <end position="469"/>
    </location>
</feature>
<feature type="strand" evidence="22">
    <location>
        <begin position="475"/>
        <end position="480"/>
    </location>
</feature>
<feature type="helix" evidence="22">
    <location>
        <begin position="482"/>
        <end position="490"/>
    </location>
</feature>
<feature type="helix" evidence="22">
    <location>
        <begin position="494"/>
        <end position="497"/>
    </location>
</feature>
<feature type="strand" evidence="21">
    <location>
        <begin position="501"/>
        <end position="503"/>
    </location>
</feature>
<feature type="strand" evidence="21">
    <location>
        <begin position="506"/>
        <end position="508"/>
    </location>
</feature>
<feature type="strand" evidence="21">
    <location>
        <begin position="511"/>
        <end position="513"/>
    </location>
</feature>
<feature type="strand" evidence="22">
    <location>
        <begin position="518"/>
        <end position="524"/>
    </location>
</feature>
<feature type="turn" evidence="21">
    <location>
        <begin position="526"/>
        <end position="528"/>
    </location>
</feature>
<feature type="helix" evidence="22">
    <location>
        <begin position="530"/>
        <end position="535"/>
    </location>
</feature>
<feature type="turn" evidence="22">
    <location>
        <begin position="536"/>
        <end position="538"/>
    </location>
</feature>
<feature type="strand" evidence="22">
    <location>
        <begin position="539"/>
        <end position="543"/>
    </location>
</feature>
<feature type="strand" evidence="21">
    <location>
        <begin position="552"/>
        <end position="554"/>
    </location>
</feature>
<feature type="helix" evidence="22">
    <location>
        <begin position="561"/>
        <end position="570"/>
    </location>
</feature>
<feature type="turn" evidence="22">
    <location>
        <begin position="572"/>
        <end position="576"/>
    </location>
</feature>
<evidence type="ECO:0000250" key="1">
    <source>
        <dbReference type="UniProtKB" id="P03114"/>
    </source>
</evidence>
<evidence type="ECO:0000255" key="2">
    <source>
        <dbReference type="HAMAP-Rule" id="MF_04000"/>
    </source>
</evidence>
<evidence type="ECO:0000256" key="3">
    <source>
        <dbReference type="SAM" id="MobiDB-lite"/>
    </source>
</evidence>
<evidence type="ECO:0000269" key="4">
    <source>
    </source>
</evidence>
<evidence type="ECO:0000269" key="5">
    <source>
    </source>
</evidence>
<evidence type="ECO:0000269" key="6">
    <source>
    </source>
</evidence>
<evidence type="ECO:0000269" key="7">
    <source>
    </source>
</evidence>
<evidence type="ECO:0000269" key="8">
    <source>
    </source>
</evidence>
<evidence type="ECO:0000269" key="9">
    <source>
    </source>
</evidence>
<evidence type="ECO:0000269" key="10">
    <source>
    </source>
</evidence>
<evidence type="ECO:0000269" key="11">
    <source>
    </source>
</evidence>
<evidence type="ECO:0000269" key="12">
    <source>
    </source>
</evidence>
<evidence type="ECO:0007744" key="13">
    <source>
        <dbReference type="PDB" id="1F08"/>
    </source>
</evidence>
<evidence type="ECO:0007744" key="14">
    <source>
        <dbReference type="PDB" id="1KSX"/>
    </source>
</evidence>
<evidence type="ECO:0007744" key="15">
    <source>
        <dbReference type="PDB" id="1KSY"/>
    </source>
</evidence>
<evidence type="ECO:0007744" key="16">
    <source>
        <dbReference type="PDB" id="2GXA"/>
    </source>
</evidence>
<evidence type="ECO:0007744" key="17">
    <source>
        <dbReference type="PDB" id="2V9P"/>
    </source>
</evidence>
<evidence type="ECO:0007744" key="18">
    <source>
        <dbReference type="PDB" id="5A9K"/>
    </source>
</evidence>
<evidence type="ECO:0007744" key="19">
    <source>
        <dbReference type="PDB" id="7APD"/>
    </source>
</evidence>
<evidence type="ECO:0007829" key="20">
    <source>
        <dbReference type="PDB" id="1F08"/>
    </source>
</evidence>
<evidence type="ECO:0007829" key="21">
    <source>
        <dbReference type="PDB" id="2GXA"/>
    </source>
</evidence>
<evidence type="ECO:0007829" key="22">
    <source>
        <dbReference type="PDB" id="2V9P"/>
    </source>
</evidence>
<sequence>MANDKGSNWDSGLGCSYLLTEAECESDKENEEPGAGVELSVESDRYDSQDEDFVDNASVFQGNHLEVFQALEKKAGEEQILNLKRKVLGSSQNSSGSEASETPVKRRKSGAKRRLFAENEANRVLTPLQVQGEGEGRQELNEEQAISHLHLQLVKSKNATVFKLGLFKSLFLCSFHDITRLFKNDKTTNQQWVLAVFGLAEVFFEASFELLKKQCSFLQMQKRSHEGGTCAVYLICFNTAKSRETVRNLMANTLNVREECLMLQPAKIRGLSAALFWFKSSLSPATLKHGALPEWIRAQTTLNESLQTEKFDFGTMVQWAYDHKYAEESKIAYEYALAAGSDSNARAFLATNSQAKHVKDCATMVRHYLRAETQALSMPAYIKARCKLATGEGSWKSILTFFNYQNIELITFINALKLWLKGIPKKNCLAFIGPPNTGKSMLCNSLIHFLGGSVLSFANHKSHFWLASLADTRAALVDDATHACWRYFDTYLRNALDGYPVSIDRKHKAAVQIKAPPLLVTSNIDVQAEDRYLYLHSRVQTFRFEQPCTDESGEQPFNITDADWKSFFVRLWGRLDLIDEEEDSEEDGDSMRTFTCSARNTNAVD</sequence>
<protein>
    <recommendedName>
        <fullName evidence="2">Replication protein E1</fullName>
        <ecNumber evidence="2 8 9">5.6.2.4</ecNumber>
    </recommendedName>
    <alternativeName>
        <fullName evidence="2">ATP-dependent helicase E1</fullName>
    </alternativeName>
    <alternativeName>
        <fullName evidence="2">DNA 3'-5' helicase E1</fullName>
    </alternativeName>
</protein>
<organism>
    <name type="scientific">Bovine papillomavirus type 1</name>
    <dbReference type="NCBI Taxonomy" id="337052"/>
    <lineage>
        <taxon>Viruses</taxon>
        <taxon>Monodnaviria</taxon>
        <taxon>Shotokuvirae</taxon>
        <taxon>Cossaviricota</taxon>
        <taxon>Papovaviricetes</taxon>
        <taxon>Zurhausenvirales</taxon>
        <taxon>Papillomaviridae</taxon>
        <taxon>Firstpapillomavirinae</taxon>
        <taxon>Deltapapillomavirus</taxon>
    </lineage>
</organism>
<accession>P03116</accession>
<accession>Q9WMH1</accession>
<reference key="1">
    <citation type="journal article" date="1982" name="Nature">
        <title>The primary structure and genetic organization of the bovine papillomavirus type 1 genome.</title>
        <authorList>
            <person name="Chen E.Y."/>
            <person name="Howley P.M."/>
            <person name="Levinson A.D."/>
            <person name="Seeburg P.H."/>
        </authorList>
    </citation>
    <scope>NUCLEOTIDE SEQUENCE [GENOMIC DNA]</scope>
</reference>
<reference key="2">
    <citation type="journal article" date="1991" name="EMBO J.">
        <title>Transient replication of BPV-1 requires two viral polypeptides encoded by the E1 and E2 open reading frames.</title>
        <authorList>
            <person name="Ustav M."/>
            <person name="Stenlung A."/>
        </authorList>
    </citation>
    <scope>FUNCTION</scope>
</reference>
<reference key="3">
    <citation type="journal article" date="1993" name="Proc. Natl. Acad. Sci. U.S.A.">
        <title>Bovine papilloma virus (BPV)-encoded E1 protein contains multiple activities required for BPV DNA replication.</title>
        <authorList>
            <person name="Seo Y.S."/>
            <person name="Mueller F."/>
            <person name="Lusky M."/>
            <person name="Hurwitz J."/>
        </authorList>
    </citation>
    <scope>FUNCTION AS A 3'-5' HELICASE</scope>
    <scope>FUNCTION AS AN ATPASE</scope>
    <scope>CATALYTIC ACTIVITY</scope>
</reference>
<reference key="4">
    <citation type="journal article" date="1993" name="Proc. Natl. Acad. Sci. U.S.A.">
        <title>The E1 protein of bovine papilloma virus 1 is an ATP-dependent DNA helicase.</title>
        <authorList>
            <person name="Yang L."/>
            <person name="Mohr I."/>
            <person name="Fouts E."/>
            <person name="Lim D.A."/>
            <person name="Nohaile M."/>
            <person name="Botchan M."/>
        </authorList>
    </citation>
    <scope>FUNCTION AS A HELICASE</scope>
</reference>
<reference key="5">
    <citation type="journal article" date="1993" name="J. Virol.">
        <title>The E1 replication protein of bovine papillomavirus type 1 contains an extended nuclear localization signal that includes a p34cdc2 phosphorylation site.</title>
        <authorList>
            <person name="Lentz M.R."/>
            <person name="Pak D."/>
            <person name="Mohr I."/>
            <person name="Botchan M.R."/>
        </authorList>
    </citation>
    <scope>SUBCELLULAR LOCATION</scope>
    <scope>PHOSPHORYLATION AT THR-102</scope>
    <scope>NUCLEAR LOCALIZATION SIGNAL</scope>
    <scope>MUTAGENESIS OF 84-LYS--ARG-85</scope>
</reference>
<reference key="6">
    <citation type="journal article" date="1997" name="Virology">
        <title>Modulation of bovine papillomavirus DNA replication by phosphorylation of the viral E1 protein.</title>
        <authorList>
            <person name="Zanardi T.A."/>
            <person name="Stanley C.M."/>
            <person name="Saville B.M."/>
            <person name="Spacek S.M."/>
            <person name="Lentz M.R."/>
        </authorList>
    </citation>
    <scope>PHOSPHORYLATION AT SER-109</scope>
    <scope>MUTAGENESIS OF SER-109</scope>
</reference>
<reference key="7">
    <citation type="journal article" date="1998" name="J. Virol.">
        <title>Characterization of the DNA-binding domain of the bovine papillomavirus replication initiator E1.</title>
        <authorList>
            <person name="Chen G."/>
            <person name="Stenlund A."/>
        </authorList>
    </citation>
    <scope>DNA-BINDING</scope>
    <scope>INTERACTION WITH PROTEIN E2</scope>
</reference>
<reference key="8">
    <citation type="journal article" date="2000" name="J. Biol. Chem.">
        <title>SUMO-1 modification of bovine papillomavirus E1 protein is required for intranuclear accumulation.</title>
        <authorList>
            <person name="Rangasamy D."/>
            <person name="Woytek K."/>
            <person name="Khan S.A."/>
            <person name="Wilson V.G."/>
        </authorList>
    </citation>
    <scope>SUMOYLATION</scope>
    <scope>FUNCTION</scope>
    <scope>MUTAGENESIS OF LYS-514</scope>
</reference>
<reference key="9">
    <citation type="journal article" date="2004" name="J. Virol.">
        <title>Recruitment of replication protein A by the papillomavirus E1 protein and modulation by single-stranded DNA.</title>
        <authorList>
            <person name="Loo Y.M."/>
            <person name="Melendy T."/>
        </authorList>
    </citation>
    <scope>FUNCTION</scope>
    <scope>INTERACTION WITH HOST RPA1</scope>
</reference>
<reference key="10">
    <citation type="journal article" date="2006" name="J. Virol.">
        <title>Papillomavirus E1 protein binds to and stimulates human topoisomerase I.</title>
        <authorList>
            <person name="Clower R.V."/>
            <person name="Fisk J.C."/>
            <person name="Melendy T."/>
        </authorList>
    </citation>
    <scope>FUNCTION</scope>
    <scope>INTERACTION WITH HOST TOP1</scope>
</reference>
<reference evidence="13" key="11">
    <citation type="journal article" date="2000" name="Mol. Cell">
        <title>Crystal structure of the DNA binding domain of the replication initiation protein E1 from papillomavirus.</title>
        <authorList>
            <person name="Enemark E.J."/>
            <person name="Chen G."/>
            <person name="Vaughn D.E."/>
            <person name="Stenlund A."/>
            <person name="Joshua-Tor L."/>
        </authorList>
    </citation>
    <scope>X-RAY CRYSTALLOGRAPHY (1.90 ANGSTROMS) OF 159-303</scope>
</reference>
<reference evidence="14 15" key="12">
    <citation type="journal article" date="2002" name="EMBO J.">
        <title>Crystal structures of two intermediates in the assembly of the papillomavirus replication initiation complex.</title>
        <authorList>
            <person name="Enemark E.J."/>
            <person name="Stenlund A."/>
            <person name="Joshua-Tor L."/>
        </authorList>
    </citation>
    <scope>X-RAY CRYSTALLOGRAPHY (3.05 ANGSTROMS) OF 159-309</scope>
</reference>
<reference evidence="16" key="13">
    <citation type="journal article" date="2006" name="Nature">
        <title>Mechanism of DNA translocation in a replicative hexameric helicase.</title>
        <authorList>
            <person name="Enemark E.J."/>
            <person name="Joshua-Tor L."/>
        </authorList>
    </citation>
    <scope>X-RAY CRYSTALLOGRAPHY (3.15 ANGSTROMS) OF 305-577</scope>
</reference>
<reference evidence="17" key="14">
    <citation type="journal article" date="2007" name="Nucleic Acids Res.">
        <title>Papillomavirus E1 helicase assembly maintains an asymmetric state in the absence of DNA and nucleotide cofactors.</title>
        <authorList>
            <person name="Sanders C.M."/>
            <person name="Kovalevskiy O.V."/>
            <person name="Sizov D."/>
            <person name="Lebedev A.A."/>
            <person name="Isupov M.N."/>
            <person name="Antson A.A."/>
        </authorList>
    </citation>
    <scope>X-RAY CRYSTALLOGRAPHY (3.00 ANGSTROMS) OF 301-605</scope>
</reference>
<reference evidence="18" key="15">
    <citation type="journal article" date="2015" name="Nucleic Acids Res.">
        <title>Structural basis for DNA strand separation by a hexameric replicative helicase.</title>
        <authorList>
            <person name="Chaban Y."/>
            <person name="Stead J.A."/>
            <person name="Ryzhenkova K."/>
            <person name="Whelan F."/>
            <person name="Lamber E.P."/>
            <person name="Antson A."/>
            <person name="Sanders C.M."/>
            <person name="Orlova E.V."/>
        </authorList>
    </citation>
    <scope>STRUCTURE BY ELECTRON MICROSCOPY (19.00 ANGSTROMS) OF 301-605</scope>
</reference>
<reference evidence="19" key="16">
    <citation type="journal article" date="2021" name="Nat. Commun.">
        <title>Unwinding of a DNA replication fork by a hexameric viral helicase.</title>
        <authorList>
            <person name="Javed A."/>
            <person name="Major B."/>
            <person name="Stead J.A."/>
            <person name="Sanders C.M."/>
            <person name="Orlova E.V."/>
        </authorList>
    </citation>
    <scope>STRUCTURE BY ELECTRON MICROSCOPY (3.90 ANGSTROMS) OF 308-605 AND 159-303 IN COMPLEX WITH DNA</scope>
    <scope>FUNCTION</scope>
    <scope>CATALYTIC ACTIVITY</scope>
    <scope>REACTION MECHANISM</scope>
    <scope>SUBUNIT</scope>
</reference>
<proteinExistence type="evidence at protein level"/>
<organismHost>
    <name type="scientific">Bos taurus</name>
    <name type="common">Bovine</name>
    <dbReference type="NCBI Taxonomy" id="9913"/>
</organismHost>
<comment type="function">
    <text evidence="2 4 5 6 7 8 9">ATP-dependent DNA 3'-5' helicase required for initiation of viral DNA replication. It forms a complex with the viral E2 protein. The E1-E2 complex binds to the replication origin which contains binding sites for both proteins. During the initial step, a dimer of E1 interacts with a dimer of protein E2 leading to a complex that binds the viral origin of replication with high specificity. Then, a second dimer of E1 displaces the E2 dimer in an ATP-dependent manner to form the E1 tetramer. Following this, two E1 monomers are added to each half of the site, which results in the formation of two E1 trimers on the viral ori. Subsequently, two hexamers will be created. The double hexamer acts as a bi-directional helicase machinery and unwinds the viral DNA and then recruits the host DNA polymerase to start replication.</text>
</comment>
<comment type="catalytic activity">
    <reaction evidence="2 8 9">
        <text>Couples ATP hydrolysis with the unwinding of duplex DNA by translocating in the 3'-5' direction.</text>
        <dbReference type="EC" id="5.6.2.4"/>
    </reaction>
</comment>
<comment type="catalytic activity">
    <reaction evidence="2 8 9">
        <text>ATP + H2O = ADP + phosphate + H(+)</text>
        <dbReference type="Rhea" id="RHEA:13065"/>
        <dbReference type="ChEBI" id="CHEBI:15377"/>
        <dbReference type="ChEBI" id="CHEBI:15378"/>
        <dbReference type="ChEBI" id="CHEBI:30616"/>
        <dbReference type="ChEBI" id="CHEBI:43474"/>
        <dbReference type="ChEBI" id="CHEBI:456216"/>
        <dbReference type="EC" id="5.6.2.4"/>
    </reaction>
</comment>
<comment type="subunit">
    <text evidence="1 2 5 6 8 12">Can form hexamers. Interacts with E2 protein; this interaction increases E1 DNA binding specificity. Interacts with host DNA polymerase subunit POLA2. Interacts with host single stranded DNA-binding protein RPA1. Interacts with host TOP1; this interaction stimulates the enzymatic activity of TOP1.</text>
</comment>
<comment type="interaction">
    <interactant intactId="EBI-7015985">
        <id>P03116</id>
    </interactant>
    <interactant intactId="EBI-80168">
        <id>P63279</id>
        <label>UBE2I</label>
    </interactant>
    <organismsDiffer>true</organismsDiffer>
    <experiments>2</experiments>
</comment>
<comment type="subcellular location">
    <subcellularLocation>
        <location evidence="2 10">Host nucleus</location>
    </subcellularLocation>
</comment>
<comment type="PTM">
    <text evidence="10 11">Phosphorylated. Probably phosphorylated by host PKA and PKC at Ser-109. Phosphorylated by host CDK1 at Thr-102.</text>
</comment>
<comment type="PTM">
    <text evidence="2">Phosphorylated.</text>
</comment>
<comment type="PTM">
    <text evidence="2 4">Sumoylated.</text>
</comment>
<comment type="similarity">
    <text evidence="2">Belongs to the papillomaviridae E1 protein family.</text>
</comment>
<keyword id="KW-0002">3D-structure</keyword>
<keyword id="KW-0067">ATP-binding</keyword>
<keyword id="KW-0235">DNA replication</keyword>
<keyword id="KW-0238">DNA-binding</keyword>
<keyword id="KW-0244">Early protein</keyword>
<keyword id="KW-0347">Helicase</keyword>
<keyword id="KW-1048">Host nucleus</keyword>
<keyword id="KW-0378">Hydrolase</keyword>
<keyword id="KW-0413">Isomerase</keyword>
<keyword id="KW-1017">Isopeptide bond</keyword>
<keyword id="KW-0547">Nucleotide-binding</keyword>
<keyword id="KW-0597">Phosphoprotein</keyword>
<keyword id="KW-1185">Reference proteome</keyword>
<keyword id="KW-0832">Ubl conjugation</keyword>
<name>VE1_BPV1</name>
<gene>
    <name evidence="2" type="primary">E1</name>
</gene>
<dbReference type="EC" id="5.6.2.4" evidence="2 8 9"/>
<dbReference type="EMBL" id="X02346">
    <property type="protein sequence ID" value="CAB46511.1"/>
    <property type="molecule type" value="Genomic_DNA"/>
</dbReference>
<dbReference type="PIR" id="A03663">
    <property type="entry name" value="W1WLEB"/>
</dbReference>
<dbReference type="RefSeq" id="NP_056739.1">
    <property type="nucleotide sequence ID" value="NC_001522.1"/>
</dbReference>
<dbReference type="PDB" id="1F08">
    <property type="method" value="X-ray"/>
    <property type="resolution" value="1.90 A"/>
    <property type="chains" value="A/B=159-303"/>
</dbReference>
<dbReference type="PDB" id="1KSX">
    <property type="method" value="X-ray"/>
    <property type="resolution" value="3.20 A"/>
    <property type="chains" value="A/B/E/F/I/J/M/N=159-303"/>
</dbReference>
<dbReference type="PDB" id="1KSY">
    <property type="method" value="X-ray"/>
    <property type="resolution" value="3.05 A"/>
    <property type="chains" value="A/B/C=159-309"/>
</dbReference>
<dbReference type="PDB" id="2GXA">
    <property type="method" value="X-ray"/>
    <property type="resolution" value="3.15 A"/>
    <property type="chains" value="A/B/C/D/E/F/G/H/I/J/K/L=305-577"/>
</dbReference>
<dbReference type="PDB" id="2V9P">
    <property type="method" value="X-ray"/>
    <property type="resolution" value="3.00 A"/>
    <property type="chains" value="A/B/C/D/E/F/G/H/I/J/K/L=301-605"/>
</dbReference>
<dbReference type="PDB" id="5A9K">
    <property type="method" value="EM"/>
    <property type="resolution" value="19.00 A"/>
    <property type="chains" value="A/B/C/D/E/F=301-605"/>
</dbReference>
<dbReference type="PDB" id="7APD">
    <property type="method" value="EM"/>
    <property type="resolution" value="3.90 A"/>
    <property type="chains" value="A/B/C/D/E/F=308-605"/>
</dbReference>
<dbReference type="PDBsum" id="1F08"/>
<dbReference type="PDBsum" id="1KSX"/>
<dbReference type="PDBsum" id="1KSY"/>
<dbReference type="PDBsum" id="2GXA"/>
<dbReference type="PDBsum" id="2V9P"/>
<dbReference type="PDBsum" id="5A9K"/>
<dbReference type="PDBsum" id="7APD"/>
<dbReference type="EMDB" id="EMD-11852"/>
<dbReference type="EMDB" id="EMD-3087"/>
<dbReference type="EMDB" id="EMD-3088"/>
<dbReference type="EMDB" id="EMD-3089"/>
<dbReference type="EMDB" id="EMD-3090"/>
<dbReference type="EMDB" id="EMD-3091"/>
<dbReference type="SMR" id="P03116"/>
<dbReference type="DIP" id="DIP-40903N"/>
<dbReference type="ELM" id="P03116"/>
<dbReference type="IntAct" id="P03116">
    <property type="interactions" value="5"/>
</dbReference>
<dbReference type="MINT" id="P03116"/>
<dbReference type="iPTMnet" id="P03116"/>
<dbReference type="GeneID" id="1489019"/>
<dbReference type="KEGG" id="vg:1489019"/>
<dbReference type="OrthoDB" id="4795at10239"/>
<dbReference type="EvolutionaryTrace" id="P03116"/>
<dbReference type="Proteomes" id="UP000006567">
    <property type="component" value="Genome"/>
</dbReference>
<dbReference type="GO" id="GO:0042025">
    <property type="term" value="C:host cell nucleus"/>
    <property type="evidence" value="ECO:0007669"/>
    <property type="project" value="UniProtKB-SubCell"/>
</dbReference>
<dbReference type="GO" id="GO:0005524">
    <property type="term" value="F:ATP binding"/>
    <property type="evidence" value="ECO:0007669"/>
    <property type="project" value="UniProtKB-UniRule"/>
</dbReference>
<dbReference type="GO" id="GO:0016887">
    <property type="term" value="F:ATP hydrolysis activity"/>
    <property type="evidence" value="ECO:0007669"/>
    <property type="project" value="RHEA"/>
</dbReference>
<dbReference type="GO" id="GO:0003677">
    <property type="term" value="F:DNA binding"/>
    <property type="evidence" value="ECO:0007669"/>
    <property type="project" value="UniProtKB-UniRule"/>
</dbReference>
<dbReference type="GO" id="GO:0003678">
    <property type="term" value="F:DNA helicase activity"/>
    <property type="evidence" value="ECO:0007669"/>
    <property type="project" value="UniProtKB-UniRule"/>
</dbReference>
<dbReference type="GO" id="GO:0006260">
    <property type="term" value="P:DNA replication"/>
    <property type="evidence" value="ECO:0007669"/>
    <property type="project" value="UniProtKB-UniRule"/>
</dbReference>
<dbReference type="Gene3D" id="3.40.1310.10">
    <property type="match status" value="1"/>
</dbReference>
<dbReference type="Gene3D" id="3.40.50.300">
    <property type="entry name" value="P-loop containing nucleotide triphosphate hydrolases"/>
    <property type="match status" value="1"/>
</dbReference>
<dbReference type="Gene3D" id="1.10.10.510">
    <property type="entry name" value="Zinc finger, large T-antigen D1 domain"/>
    <property type="match status" value="1"/>
</dbReference>
<dbReference type="HAMAP" id="MF_04000">
    <property type="entry name" value="PPV_E1"/>
    <property type="match status" value="1"/>
</dbReference>
<dbReference type="InterPro" id="IPR014015">
    <property type="entry name" value="Helicase_SF3_DNA-vir"/>
</dbReference>
<dbReference type="InterPro" id="IPR027417">
    <property type="entry name" value="P-loop_NTPase"/>
</dbReference>
<dbReference type="InterPro" id="IPR001177">
    <property type="entry name" value="PPV_DNA_helicase_E1_C"/>
</dbReference>
<dbReference type="InterPro" id="IPR014000">
    <property type="entry name" value="PPV_DNA_helicase_E1_N"/>
</dbReference>
<dbReference type="InterPro" id="IPR046832">
    <property type="entry name" value="PPV_E1_DBD"/>
</dbReference>
<dbReference type="InterPro" id="IPR046935">
    <property type="entry name" value="PPV_E1_DBD_sf"/>
</dbReference>
<dbReference type="InterPro" id="IPR016393">
    <property type="entry name" value="Rep_E1_papillomaV"/>
</dbReference>
<dbReference type="InterPro" id="IPR037102">
    <property type="entry name" value="Znf_lg_T-Ag_D1_dom_sf"/>
</dbReference>
<dbReference type="Pfam" id="PF00519">
    <property type="entry name" value="PPV_E1_C"/>
    <property type="match status" value="1"/>
</dbReference>
<dbReference type="Pfam" id="PF20450">
    <property type="entry name" value="PPV_E1_DBD"/>
    <property type="match status" value="1"/>
</dbReference>
<dbReference type="Pfam" id="PF00524">
    <property type="entry name" value="PPV_E1_N"/>
    <property type="match status" value="1"/>
</dbReference>
<dbReference type="PIRSF" id="PIRSF003383">
    <property type="entry name" value="Rep_E1_papillomaV"/>
    <property type="match status" value="1"/>
</dbReference>
<dbReference type="SUPFAM" id="SSF55464">
    <property type="entry name" value="Origin of replication-binding domain, RBD-like"/>
    <property type="match status" value="1"/>
</dbReference>
<dbReference type="SUPFAM" id="SSF52540">
    <property type="entry name" value="P-loop containing nucleoside triphosphate hydrolases"/>
    <property type="match status" value="1"/>
</dbReference>
<dbReference type="PROSITE" id="PS51206">
    <property type="entry name" value="SF3_HELICASE_1"/>
    <property type="match status" value="1"/>
</dbReference>